<gene>
    <name evidence="1" type="primary">murE</name>
    <name type="ordered locus">HI_1133</name>
</gene>
<protein>
    <recommendedName>
        <fullName evidence="1">UDP-N-acetylmuramoyl-L-alanyl-D-glutamate--2,6-diaminopimelate ligase</fullName>
        <ecNumber evidence="1">6.3.2.13</ecNumber>
    </recommendedName>
    <alternativeName>
        <fullName evidence="1">Meso-A2pm-adding enzyme</fullName>
    </alternativeName>
    <alternativeName>
        <fullName evidence="1">Meso-diaminopimelate-adding enzyme</fullName>
    </alternativeName>
    <alternativeName>
        <fullName evidence="1">UDP-MurNAc-L-Ala-D-Glu:meso-diaminopimelate ligase</fullName>
    </alternativeName>
    <alternativeName>
        <fullName evidence="1">UDP-MurNAc-tripeptide synthetase</fullName>
    </alternativeName>
    <alternativeName>
        <fullName evidence="1">UDP-N-acetylmuramyl-tripeptide synthetase</fullName>
    </alternativeName>
</protein>
<accession>P45060</accession>
<name>MURE_HAEIN</name>
<feature type="chain" id="PRO_0000101900" description="UDP-N-acetylmuramoyl-L-alanyl-D-glutamate--2,6-diaminopimelate ligase">
    <location>
        <begin position="1"/>
        <end position="488"/>
    </location>
</feature>
<feature type="short sequence motif" description="Meso-diaminopimelate recognition motif">
    <location>
        <begin position="410"/>
        <end position="413"/>
    </location>
</feature>
<feature type="binding site" evidence="1">
    <location>
        <position position="24"/>
    </location>
    <ligand>
        <name>UDP-N-acetyl-alpha-D-muramoyl-L-alanyl-D-glutamate</name>
        <dbReference type="ChEBI" id="CHEBI:83900"/>
    </ligand>
</feature>
<feature type="binding site" evidence="1">
    <location>
        <position position="26"/>
    </location>
    <ligand>
        <name>UDP-N-acetyl-alpha-D-muramoyl-L-alanyl-D-glutamate</name>
        <dbReference type="ChEBI" id="CHEBI:83900"/>
    </ligand>
</feature>
<feature type="binding site" evidence="1">
    <location>
        <begin position="41"/>
        <end position="43"/>
    </location>
    <ligand>
        <name>UDP-N-acetyl-alpha-D-muramoyl-L-alanyl-D-glutamate</name>
        <dbReference type="ChEBI" id="CHEBI:83900"/>
    </ligand>
</feature>
<feature type="binding site" evidence="1">
    <location>
        <begin position="113"/>
        <end position="119"/>
    </location>
    <ligand>
        <name>ATP</name>
        <dbReference type="ChEBI" id="CHEBI:30616"/>
    </ligand>
</feature>
<feature type="binding site" evidence="1">
    <location>
        <position position="154"/>
    </location>
    <ligand>
        <name>UDP-N-acetyl-alpha-D-muramoyl-L-alanyl-D-glutamate</name>
        <dbReference type="ChEBI" id="CHEBI:83900"/>
    </ligand>
</feature>
<feature type="binding site" evidence="1">
    <location>
        <begin position="155"/>
        <end position="156"/>
    </location>
    <ligand>
        <name>UDP-N-acetyl-alpha-D-muramoyl-L-alanyl-D-glutamate</name>
        <dbReference type="ChEBI" id="CHEBI:83900"/>
    </ligand>
</feature>
<feature type="binding site" evidence="1">
    <location>
        <position position="182"/>
    </location>
    <ligand>
        <name>UDP-N-acetyl-alpha-D-muramoyl-L-alanyl-D-glutamate</name>
        <dbReference type="ChEBI" id="CHEBI:83900"/>
    </ligand>
</feature>
<feature type="binding site" evidence="1">
    <location>
        <position position="188"/>
    </location>
    <ligand>
        <name>UDP-N-acetyl-alpha-D-muramoyl-L-alanyl-D-glutamate</name>
        <dbReference type="ChEBI" id="CHEBI:83900"/>
    </ligand>
</feature>
<feature type="binding site" evidence="1">
    <location>
        <position position="190"/>
    </location>
    <ligand>
        <name>UDP-N-acetyl-alpha-D-muramoyl-L-alanyl-D-glutamate</name>
        <dbReference type="ChEBI" id="CHEBI:83900"/>
    </ligand>
</feature>
<feature type="binding site" evidence="1">
    <location>
        <position position="386"/>
    </location>
    <ligand>
        <name>meso-2,6-diaminopimelate</name>
        <dbReference type="ChEBI" id="CHEBI:57791"/>
    </ligand>
</feature>
<feature type="binding site" evidence="1">
    <location>
        <begin position="410"/>
        <end position="413"/>
    </location>
    <ligand>
        <name>meso-2,6-diaminopimelate</name>
        <dbReference type="ChEBI" id="CHEBI:57791"/>
    </ligand>
</feature>
<feature type="binding site" evidence="1">
    <location>
        <position position="461"/>
    </location>
    <ligand>
        <name>meso-2,6-diaminopimelate</name>
        <dbReference type="ChEBI" id="CHEBI:57791"/>
    </ligand>
</feature>
<feature type="binding site" evidence="1">
    <location>
        <position position="465"/>
    </location>
    <ligand>
        <name>meso-2,6-diaminopimelate</name>
        <dbReference type="ChEBI" id="CHEBI:57791"/>
    </ligand>
</feature>
<feature type="modified residue" description="N6-carboxylysine" evidence="1">
    <location>
        <position position="222"/>
    </location>
</feature>
<reference key="1">
    <citation type="journal article" date="1995" name="Science">
        <title>Whole-genome random sequencing and assembly of Haemophilus influenzae Rd.</title>
        <authorList>
            <person name="Fleischmann R.D."/>
            <person name="Adams M.D."/>
            <person name="White O."/>
            <person name="Clayton R.A."/>
            <person name="Kirkness E.F."/>
            <person name="Kerlavage A.R."/>
            <person name="Bult C.J."/>
            <person name="Tomb J.-F."/>
            <person name="Dougherty B.A."/>
            <person name="Merrick J.M."/>
            <person name="McKenney K."/>
            <person name="Sutton G.G."/>
            <person name="FitzHugh W."/>
            <person name="Fields C.A."/>
            <person name="Gocayne J.D."/>
            <person name="Scott J.D."/>
            <person name="Shirley R."/>
            <person name="Liu L.-I."/>
            <person name="Glodek A."/>
            <person name="Kelley J.M."/>
            <person name="Weidman J.F."/>
            <person name="Phillips C.A."/>
            <person name="Spriggs T."/>
            <person name="Hedblom E."/>
            <person name="Cotton M.D."/>
            <person name="Utterback T.R."/>
            <person name="Hanna M.C."/>
            <person name="Nguyen D.T."/>
            <person name="Saudek D.M."/>
            <person name="Brandon R.C."/>
            <person name="Fine L.D."/>
            <person name="Fritchman J.L."/>
            <person name="Fuhrmann J.L."/>
            <person name="Geoghagen N.S.M."/>
            <person name="Gnehm C.L."/>
            <person name="McDonald L.A."/>
            <person name="Small K.V."/>
            <person name="Fraser C.M."/>
            <person name="Smith H.O."/>
            <person name="Venter J.C."/>
        </authorList>
    </citation>
    <scope>NUCLEOTIDE SEQUENCE [LARGE SCALE GENOMIC DNA]</scope>
    <source>
        <strain>ATCC 51907 / DSM 11121 / KW20 / Rd</strain>
    </source>
</reference>
<sequence length="488" mass="53523">MKKLTALFNLPELKNDIELHNMVLDSRKVKAGDLFVAIKGHQVDGNQFIDSALHSGASAVVSETELSSEHLTVAFIGNVPVVKYYQLAHHLSSLADVFYDSPSNNLTLVGVTGTNGKTTISQLLAQWAELLGHRAAVMGTIGNGLFGQIVEAKNTTGSAVEIQSSLSAFKHAGADFTSIEVSSHGLAQHRVEALHFKAAIFTNLTRDHLDYHQSMENYAAAKKRLFTELDTQIKVINADDEIGYQWLTELPDAIAVSMNADFKVGSHQWMKAINIHYHFKGADITFESSWGNGVLHSPLIGAFNVSNLLLVMTTLLSFGYPLENLLATAKSLKGVCGRMEMIQYPNKPTVIVDYAHTPDALEKALIAAREHCQGELWCIFGCGGDRDRGKRPLMAQVAEQFAEKIIVTKDNPRTESQSQIETDIVAGFKNMEKVGIIPDRAQAIQFAIESAVENDVILIAGKGHEHYQIIGSEVVHFSDQEIALDFLK</sequence>
<evidence type="ECO:0000255" key="1">
    <source>
        <dbReference type="HAMAP-Rule" id="MF_00208"/>
    </source>
</evidence>
<proteinExistence type="inferred from homology"/>
<comment type="function">
    <text evidence="1">Catalyzes the addition of meso-diaminopimelic acid to the nucleotide precursor UDP-N-acetylmuramoyl-L-alanyl-D-glutamate (UMAG) in the biosynthesis of bacterial cell-wall peptidoglycan.</text>
</comment>
<comment type="catalytic activity">
    <reaction evidence="1">
        <text>UDP-N-acetyl-alpha-D-muramoyl-L-alanyl-D-glutamate + meso-2,6-diaminopimelate + ATP = UDP-N-acetyl-alpha-D-muramoyl-L-alanyl-gamma-D-glutamyl-meso-2,6-diaminopimelate + ADP + phosphate + H(+)</text>
        <dbReference type="Rhea" id="RHEA:23676"/>
        <dbReference type="ChEBI" id="CHEBI:15378"/>
        <dbReference type="ChEBI" id="CHEBI:30616"/>
        <dbReference type="ChEBI" id="CHEBI:43474"/>
        <dbReference type="ChEBI" id="CHEBI:57791"/>
        <dbReference type="ChEBI" id="CHEBI:83900"/>
        <dbReference type="ChEBI" id="CHEBI:83905"/>
        <dbReference type="ChEBI" id="CHEBI:456216"/>
        <dbReference type="EC" id="6.3.2.13"/>
    </reaction>
</comment>
<comment type="cofactor">
    <cofactor evidence="1">
        <name>Mg(2+)</name>
        <dbReference type="ChEBI" id="CHEBI:18420"/>
    </cofactor>
</comment>
<comment type="pathway">
    <text evidence="1">Cell wall biogenesis; peptidoglycan biosynthesis.</text>
</comment>
<comment type="subcellular location">
    <subcellularLocation>
        <location evidence="1">Cytoplasm</location>
    </subcellularLocation>
</comment>
<comment type="PTM">
    <text evidence="1">Carboxylation is probably crucial for Mg(2+) binding and, consequently, for the gamma-phosphate positioning of ATP.</text>
</comment>
<comment type="similarity">
    <text evidence="1">Belongs to the MurCDEF family. MurE subfamily.</text>
</comment>
<keyword id="KW-0067">ATP-binding</keyword>
<keyword id="KW-0131">Cell cycle</keyword>
<keyword id="KW-0132">Cell division</keyword>
<keyword id="KW-0133">Cell shape</keyword>
<keyword id="KW-0961">Cell wall biogenesis/degradation</keyword>
<keyword id="KW-0963">Cytoplasm</keyword>
<keyword id="KW-0436">Ligase</keyword>
<keyword id="KW-0460">Magnesium</keyword>
<keyword id="KW-0547">Nucleotide-binding</keyword>
<keyword id="KW-0573">Peptidoglycan synthesis</keyword>
<keyword id="KW-1185">Reference proteome</keyword>
<organism>
    <name type="scientific">Haemophilus influenzae (strain ATCC 51907 / DSM 11121 / KW20 / Rd)</name>
    <dbReference type="NCBI Taxonomy" id="71421"/>
    <lineage>
        <taxon>Bacteria</taxon>
        <taxon>Pseudomonadati</taxon>
        <taxon>Pseudomonadota</taxon>
        <taxon>Gammaproteobacteria</taxon>
        <taxon>Pasteurellales</taxon>
        <taxon>Pasteurellaceae</taxon>
        <taxon>Haemophilus</taxon>
    </lineage>
</organism>
<dbReference type="EC" id="6.3.2.13" evidence="1"/>
<dbReference type="EMBL" id="L42023">
    <property type="protein sequence ID" value="AAC22788.1"/>
    <property type="molecule type" value="Genomic_DNA"/>
</dbReference>
<dbReference type="PIR" id="H64184">
    <property type="entry name" value="H64184"/>
</dbReference>
<dbReference type="RefSeq" id="NP_439291.1">
    <property type="nucleotide sequence ID" value="NC_000907.1"/>
</dbReference>
<dbReference type="SMR" id="P45060"/>
<dbReference type="STRING" id="71421.HI_1133"/>
<dbReference type="EnsemblBacteria" id="AAC22788">
    <property type="protein sequence ID" value="AAC22788"/>
    <property type="gene ID" value="HI_1133"/>
</dbReference>
<dbReference type="KEGG" id="hin:HI_1133"/>
<dbReference type="PATRIC" id="fig|71421.8.peg.1183"/>
<dbReference type="eggNOG" id="COG0769">
    <property type="taxonomic scope" value="Bacteria"/>
</dbReference>
<dbReference type="HOGENOM" id="CLU_022291_3_2_6"/>
<dbReference type="OrthoDB" id="9800958at2"/>
<dbReference type="PhylomeDB" id="P45060"/>
<dbReference type="BioCyc" id="HINF71421:G1GJ1-1166-MONOMER"/>
<dbReference type="UniPathway" id="UPA00219"/>
<dbReference type="Proteomes" id="UP000000579">
    <property type="component" value="Chromosome"/>
</dbReference>
<dbReference type="GO" id="GO:0005737">
    <property type="term" value="C:cytoplasm"/>
    <property type="evidence" value="ECO:0007669"/>
    <property type="project" value="UniProtKB-SubCell"/>
</dbReference>
<dbReference type="GO" id="GO:0005524">
    <property type="term" value="F:ATP binding"/>
    <property type="evidence" value="ECO:0007669"/>
    <property type="project" value="UniProtKB-UniRule"/>
</dbReference>
<dbReference type="GO" id="GO:0000287">
    <property type="term" value="F:magnesium ion binding"/>
    <property type="evidence" value="ECO:0007669"/>
    <property type="project" value="UniProtKB-UniRule"/>
</dbReference>
<dbReference type="GO" id="GO:0008765">
    <property type="term" value="F:UDP-N-acetylmuramoylalanyl-D-glutamate-2,6-diaminopimelate ligase activity"/>
    <property type="evidence" value="ECO:0007669"/>
    <property type="project" value="UniProtKB-UniRule"/>
</dbReference>
<dbReference type="GO" id="GO:0051301">
    <property type="term" value="P:cell division"/>
    <property type="evidence" value="ECO:0007669"/>
    <property type="project" value="UniProtKB-KW"/>
</dbReference>
<dbReference type="GO" id="GO:0071555">
    <property type="term" value="P:cell wall organization"/>
    <property type="evidence" value="ECO:0007669"/>
    <property type="project" value="UniProtKB-KW"/>
</dbReference>
<dbReference type="GO" id="GO:0009252">
    <property type="term" value="P:peptidoglycan biosynthetic process"/>
    <property type="evidence" value="ECO:0007669"/>
    <property type="project" value="UniProtKB-UniRule"/>
</dbReference>
<dbReference type="GO" id="GO:0008360">
    <property type="term" value="P:regulation of cell shape"/>
    <property type="evidence" value="ECO:0007669"/>
    <property type="project" value="UniProtKB-KW"/>
</dbReference>
<dbReference type="FunFam" id="3.90.190.20:FF:000006">
    <property type="entry name" value="UDP-N-acetylmuramoyl-L-alanyl-D-glutamate--2,6-diaminopimelate ligase"/>
    <property type="match status" value="1"/>
</dbReference>
<dbReference type="Gene3D" id="3.90.190.20">
    <property type="entry name" value="Mur ligase, C-terminal domain"/>
    <property type="match status" value="1"/>
</dbReference>
<dbReference type="Gene3D" id="3.40.1190.10">
    <property type="entry name" value="Mur-like, catalytic domain"/>
    <property type="match status" value="1"/>
</dbReference>
<dbReference type="Gene3D" id="3.40.1390.10">
    <property type="entry name" value="MurE/MurF, N-terminal domain"/>
    <property type="match status" value="1"/>
</dbReference>
<dbReference type="HAMAP" id="MF_00208">
    <property type="entry name" value="MurE"/>
    <property type="match status" value="1"/>
</dbReference>
<dbReference type="InterPro" id="IPR036565">
    <property type="entry name" value="Mur-like_cat_sf"/>
</dbReference>
<dbReference type="InterPro" id="IPR004101">
    <property type="entry name" value="Mur_ligase_C"/>
</dbReference>
<dbReference type="InterPro" id="IPR036615">
    <property type="entry name" value="Mur_ligase_C_dom_sf"/>
</dbReference>
<dbReference type="InterPro" id="IPR013221">
    <property type="entry name" value="Mur_ligase_cen"/>
</dbReference>
<dbReference type="InterPro" id="IPR000713">
    <property type="entry name" value="Mur_ligase_N"/>
</dbReference>
<dbReference type="InterPro" id="IPR035911">
    <property type="entry name" value="MurE/MurF_N"/>
</dbReference>
<dbReference type="InterPro" id="IPR005761">
    <property type="entry name" value="UDP-N-AcMur-Glu-dNH2Pim_ligase"/>
</dbReference>
<dbReference type="NCBIfam" id="TIGR01085">
    <property type="entry name" value="murE"/>
    <property type="match status" value="1"/>
</dbReference>
<dbReference type="NCBIfam" id="NF001123">
    <property type="entry name" value="PRK00139.1-1"/>
    <property type="match status" value="1"/>
</dbReference>
<dbReference type="NCBIfam" id="NF001124">
    <property type="entry name" value="PRK00139.1-2"/>
    <property type="match status" value="1"/>
</dbReference>
<dbReference type="NCBIfam" id="NF001126">
    <property type="entry name" value="PRK00139.1-4"/>
    <property type="match status" value="1"/>
</dbReference>
<dbReference type="PANTHER" id="PTHR23135">
    <property type="entry name" value="MUR LIGASE FAMILY MEMBER"/>
    <property type="match status" value="1"/>
</dbReference>
<dbReference type="PANTHER" id="PTHR23135:SF4">
    <property type="entry name" value="UDP-N-ACETYLMURAMOYL-L-ALANYL-D-GLUTAMATE--2,6-DIAMINOPIMELATE LIGASE MURE HOMOLOG, CHLOROPLASTIC"/>
    <property type="match status" value="1"/>
</dbReference>
<dbReference type="Pfam" id="PF01225">
    <property type="entry name" value="Mur_ligase"/>
    <property type="match status" value="1"/>
</dbReference>
<dbReference type="Pfam" id="PF02875">
    <property type="entry name" value="Mur_ligase_C"/>
    <property type="match status" value="1"/>
</dbReference>
<dbReference type="Pfam" id="PF08245">
    <property type="entry name" value="Mur_ligase_M"/>
    <property type="match status" value="1"/>
</dbReference>
<dbReference type="SUPFAM" id="SSF53623">
    <property type="entry name" value="MurD-like peptide ligases, catalytic domain"/>
    <property type="match status" value="1"/>
</dbReference>
<dbReference type="SUPFAM" id="SSF53244">
    <property type="entry name" value="MurD-like peptide ligases, peptide-binding domain"/>
    <property type="match status" value="1"/>
</dbReference>
<dbReference type="SUPFAM" id="SSF63418">
    <property type="entry name" value="MurE/MurF N-terminal domain"/>
    <property type="match status" value="1"/>
</dbReference>